<feature type="chain" id="PRO_0000379547" description="Putrescine aminotransferase">
    <location>
        <begin position="1"/>
        <end position="459"/>
    </location>
</feature>
<feature type="binding site" description="in other chain" evidence="1">
    <location>
        <begin position="150"/>
        <end position="151"/>
    </location>
    <ligand>
        <name>pyridoxal 5'-phosphate</name>
        <dbReference type="ChEBI" id="CHEBI:597326"/>
        <note>ligand shared between dimeric partners</note>
    </ligand>
</feature>
<feature type="binding site" description="in other chain" evidence="1">
    <location>
        <position position="274"/>
    </location>
    <ligand>
        <name>pyridoxal 5'-phosphate</name>
        <dbReference type="ChEBI" id="CHEBI:597326"/>
        <note>ligand shared between dimeric partners</note>
    </ligand>
</feature>
<feature type="binding site" evidence="1">
    <location>
        <position position="332"/>
    </location>
    <ligand>
        <name>pyridoxal 5'-phosphate</name>
        <dbReference type="ChEBI" id="CHEBI:597326"/>
        <note>ligand shared between dimeric partners</note>
    </ligand>
</feature>
<feature type="modified residue" description="N6-(pyridoxal phosphate)lysine" evidence="1">
    <location>
        <position position="300"/>
    </location>
</feature>
<accession>B7LH08</accession>
<reference key="1">
    <citation type="journal article" date="2009" name="PLoS Genet.">
        <title>Organised genome dynamics in the Escherichia coli species results in highly diverse adaptive paths.</title>
        <authorList>
            <person name="Touchon M."/>
            <person name="Hoede C."/>
            <person name="Tenaillon O."/>
            <person name="Barbe V."/>
            <person name="Baeriswyl S."/>
            <person name="Bidet P."/>
            <person name="Bingen E."/>
            <person name="Bonacorsi S."/>
            <person name="Bouchier C."/>
            <person name="Bouvet O."/>
            <person name="Calteau A."/>
            <person name="Chiapello H."/>
            <person name="Clermont O."/>
            <person name="Cruveiller S."/>
            <person name="Danchin A."/>
            <person name="Diard M."/>
            <person name="Dossat C."/>
            <person name="Karoui M.E."/>
            <person name="Frapy E."/>
            <person name="Garry L."/>
            <person name="Ghigo J.M."/>
            <person name="Gilles A.M."/>
            <person name="Johnson J."/>
            <person name="Le Bouguenec C."/>
            <person name="Lescat M."/>
            <person name="Mangenot S."/>
            <person name="Martinez-Jehanne V."/>
            <person name="Matic I."/>
            <person name="Nassif X."/>
            <person name="Oztas S."/>
            <person name="Petit M.A."/>
            <person name="Pichon C."/>
            <person name="Rouy Z."/>
            <person name="Ruf C.S."/>
            <person name="Schneider D."/>
            <person name="Tourret J."/>
            <person name="Vacherie B."/>
            <person name="Vallenet D."/>
            <person name="Medigue C."/>
            <person name="Rocha E.P.C."/>
            <person name="Denamur E."/>
        </authorList>
    </citation>
    <scope>NUCLEOTIDE SEQUENCE [LARGE SCALE GENOMIC DNA]</scope>
    <source>
        <strain>55989 / EAEC</strain>
    </source>
</reference>
<dbReference type="EC" id="2.6.1.82" evidence="1"/>
<dbReference type="EC" id="2.6.1.29" evidence="1"/>
<dbReference type="EMBL" id="CU928145">
    <property type="protein sequence ID" value="CAU99632.1"/>
    <property type="status" value="ALT_INIT"/>
    <property type="molecule type" value="Genomic_DNA"/>
</dbReference>
<dbReference type="SMR" id="B7LH08"/>
<dbReference type="KEGG" id="eck:EC55989_3487"/>
<dbReference type="HOGENOM" id="CLU_016922_10_0_6"/>
<dbReference type="UniPathway" id="UPA00188">
    <property type="reaction ID" value="UER00290"/>
</dbReference>
<dbReference type="Proteomes" id="UP000000746">
    <property type="component" value="Chromosome"/>
</dbReference>
<dbReference type="GO" id="GO:0019161">
    <property type="term" value="F:diamine transaminase activity"/>
    <property type="evidence" value="ECO:0007669"/>
    <property type="project" value="UniProtKB-EC"/>
</dbReference>
<dbReference type="GO" id="GO:0042802">
    <property type="term" value="F:identical protein binding"/>
    <property type="evidence" value="ECO:0007669"/>
    <property type="project" value="TreeGrafter"/>
</dbReference>
<dbReference type="GO" id="GO:0033094">
    <property type="term" value="F:putrescine--2-oxoglutarate transaminase activity"/>
    <property type="evidence" value="ECO:0007669"/>
    <property type="project" value="UniProtKB-UniRule"/>
</dbReference>
<dbReference type="GO" id="GO:0030170">
    <property type="term" value="F:pyridoxal phosphate binding"/>
    <property type="evidence" value="ECO:0007669"/>
    <property type="project" value="UniProtKB-UniRule"/>
</dbReference>
<dbReference type="GO" id="GO:0019477">
    <property type="term" value="P:L-lysine catabolic process"/>
    <property type="evidence" value="ECO:0007669"/>
    <property type="project" value="UniProtKB-UniRule"/>
</dbReference>
<dbReference type="GO" id="GO:0009447">
    <property type="term" value="P:putrescine catabolic process"/>
    <property type="evidence" value="ECO:0007669"/>
    <property type="project" value="UniProtKB-UniRule"/>
</dbReference>
<dbReference type="CDD" id="cd00610">
    <property type="entry name" value="OAT_like"/>
    <property type="match status" value="1"/>
</dbReference>
<dbReference type="FunFam" id="3.40.640.10:FF:000004">
    <property type="entry name" value="Acetylornithine aminotransferase"/>
    <property type="match status" value="1"/>
</dbReference>
<dbReference type="Gene3D" id="3.90.1150.10">
    <property type="entry name" value="Aspartate Aminotransferase, domain 1"/>
    <property type="match status" value="1"/>
</dbReference>
<dbReference type="Gene3D" id="3.40.640.10">
    <property type="entry name" value="Type I PLP-dependent aspartate aminotransferase-like (Major domain)"/>
    <property type="match status" value="1"/>
</dbReference>
<dbReference type="HAMAP" id="MF_01276">
    <property type="entry name" value="Putres_aminotrans_3"/>
    <property type="match status" value="1"/>
</dbReference>
<dbReference type="InterPro" id="IPR005814">
    <property type="entry name" value="Aminotrans_3"/>
</dbReference>
<dbReference type="InterPro" id="IPR049704">
    <property type="entry name" value="Aminotrans_3_PPA_site"/>
</dbReference>
<dbReference type="InterPro" id="IPR050103">
    <property type="entry name" value="Class-III_PLP-dep_AT"/>
</dbReference>
<dbReference type="InterPro" id="IPR017747">
    <property type="entry name" value="Putrescine_aminotransferase"/>
</dbReference>
<dbReference type="InterPro" id="IPR015424">
    <property type="entry name" value="PyrdxlP-dep_Trfase"/>
</dbReference>
<dbReference type="InterPro" id="IPR015421">
    <property type="entry name" value="PyrdxlP-dep_Trfase_major"/>
</dbReference>
<dbReference type="InterPro" id="IPR015422">
    <property type="entry name" value="PyrdxlP-dep_Trfase_small"/>
</dbReference>
<dbReference type="NCBIfam" id="NF008570">
    <property type="entry name" value="PRK11522.1"/>
    <property type="match status" value="1"/>
</dbReference>
<dbReference type="NCBIfam" id="TIGR03372">
    <property type="entry name" value="putres_am_tran"/>
    <property type="match status" value="1"/>
</dbReference>
<dbReference type="PANTHER" id="PTHR11986">
    <property type="entry name" value="AMINOTRANSFERASE CLASS III"/>
    <property type="match status" value="1"/>
</dbReference>
<dbReference type="PANTHER" id="PTHR11986:SF112">
    <property type="entry name" value="PUTRESCINE AMINOTRANSFERASE"/>
    <property type="match status" value="1"/>
</dbReference>
<dbReference type="Pfam" id="PF00202">
    <property type="entry name" value="Aminotran_3"/>
    <property type="match status" value="1"/>
</dbReference>
<dbReference type="PIRSF" id="PIRSF000521">
    <property type="entry name" value="Transaminase_4ab_Lys_Orn"/>
    <property type="match status" value="1"/>
</dbReference>
<dbReference type="SUPFAM" id="SSF53383">
    <property type="entry name" value="PLP-dependent transferases"/>
    <property type="match status" value="1"/>
</dbReference>
<dbReference type="PROSITE" id="PS00600">
    <property type="entry name" value="AA_TRANSFER_CLASS_3"/>
    <property type="match status" value="1"/>
</dbReference>
<sequence length="459" mass="49631">MNRLPSSASALACSAHALNLIEKRTLDHEEMKALNREVIEYFKEHVNPGFLEYRKSVTAGGDYGAVEWQAGGLNTLVDTQGQEFIDCLGGFGIFNVGHRNPVVVSAVQNQLAKQPLHSQELLDPLRAMLAKTLAALTPGKLKYSFFCNSGTESVEAALKLAKAYQSPRGKFTFIATSGAFHGKSLGALSATAKSTFRKPFMPLLPGFRHVPFGNIEAMRTALNECKKTGDDVAAVILEPIQGEGGVILPPPGYLTAVRKLCDEFGALMILDEVQTGMGRTGKMFACEHENVQPDILCLAKALGGGVMPIGATIATEEVFSVLFDNPFLHTTTFGGNPLACAAALATINVLLEQNLPAQAEQKGDMLLDGFRQLAREYPDLVQEARGKGMLMAIEFVDNEIGYNFASEMFRQRVLVAGTLNNAKTIRIEPPLTLTIEQCELVIKAARKALAAMRVSVEEA</sequence>
<evidence type="ECO:0000255" key="1">
    <source>
        <dbReference type="HAMAP-Rule" id="MF_01276"/>
    </source>
</evidence>
<evidence type="ECO:0000305" key="2"/>
<comment type="function">
    <text evidence="1">Catalyzes the aminotransferase reaction from putrescine to 2-oxoglutarate, leading to glutamate and 4-aminobutanal, which spontaneously cyclizes to form 1-pyrroline. This is the first step in one of two pathways for putrescine degradation, where putrescine is converted into 4-aminobutanoate (gamma-aminobutyrate or GABA) via 4-aminobutanal. Also functions as a cadaverine transaminase in a a L-lysine degradation pathway to succinate that proceeds via cadaverine, glutarate and L-2-hydroxyglutarate.</text>
</comment>
<comment type="catalytic activity">
    <reaction evidence="1">
        <text>an alkane-alpha,omega-diamine + 2-oxoglutarate = an omega-aminoaldehyde + L-glutamate</text>
        <dbReference type="Rhea" id="RHEA:18217"/>
        <dbReference type="Rhea" id="RHEA-COMP:9766"/>
        <dbReference type="Rhea" id="RHEA-COMP:12750"/>
        <dbReference type="ChEBI" id="CHEBI:16810"/>
        <dbReference type="ChEBI" id="CHEBI:29985"/>
        <dbReference type="ChEBI" id="CHEBI:70977"/>
        <dbReference type="ChEBI" id="CHEBI:133427"/>
        <dbReference type="EC" id="2.6.1.29"/>
    </reaction>
    <physiologicalReaction direction="left-to-right" evidence="1">
        <dbReference type="Rhea" id="RHEA:18218"/>
    </physiologicalReaction>
</comment>
<comment type="catalytic activity">
    <reaction evidence="1">
        <text>putrescine + 2-oxoglutarate = 1-pyrroline + L-glutamate + H2O</text>
        <dbReference type="Rhea" id="RHEA:12268"/>
        <dbReference type="ChEBI" id="CHEBI:15377"/>
        <dbReference type="ChEBI" id="CHEBI:16810"/>
        <dbReference type="ChEBI" id="CHEBI:29985"/>
        <dbReference type="ChEBI" id="CHEBI:36781"/>
        <dbReference type="ChEBI" id="CHEBI:326268"/>
        <dbReference type="EC" id="2.6.1.82"/>
    </reaction>
    <physiologicalReaction direction="left-to-right" evidence="1">
        <dbReference type="Rhea" id="RHEA:12269"/>
    </physiologicalReaction>
</comment>
<comment type="catalytic activity">
    <reaction evidence="1">
        <text>cadaverine + 2-oxoglutarate = 5-aminopentanal + L-glutamate</text>
        <dbReference type="Rhea" id="RHEA:61624"/>
        <dbReference type="ChEBI" id="CHEBI:16810"/>
        <dbReference type="ChEBI" id="CHEBI:29985"/>
        <dbReference type="ChEBI" id="CHEBI:58384"/>
        <dbReference type="ChEBI" id="CHEBI:144896"/>
    </reaction>
    <physiologicalReaction direction="left-to-right" evidence="1">
        <dbReference type="Rhea" id="RHEA:61625"/>
    </physiologicalReaction>
</comment>
<comment type="cofactor">
    <cofactor evidence="1">
        <name>pyridoxal 5'-phosphate</name>
        <dbReference type="ChEBI" id="CHEBI:597326"/>
    </cofactor>
</comment>
<comment type="pathway">
    <text evidence="1">Amine and polyamine degradation; putrescine degradation; 4-aminobutanal from putrescine (transaminase route): step 1/1.</text>
</comment>
<comment type="similarity">
    <text evidence="1">Belongs to the class-III pyridoxal-phosphate-dependent aminotransferase family. Putrescine aminotransferase subfamily.</text>
</comment>
<comment type="sequence caution" evidence="2">
    <conflict type="erroneous initiation">
        <sequence resource="EMBL-CDS" id="CAU99632"/>
    </conflict>
</comment>
<organism>
    <name type="scientific">Escherichia coli (strain 55989 / EAEC)</name>
    <dbReference type="NCBI Taxonomy" id="585055"/>
    <lineage>
        <taxon>Bacteria</taxon>
        <taxon>Pseudomonadati</taxon>
        <taxon>Pseudomonadota</taxon>
        <taxon>Gammaproteobacteria</taxon>
        <taxon>Enterobacterales</taxon>
        <taxon>Enterobacteriaceae</taxon>
        <taxon>Escherichia</taxon>
    </lineage>
</organism>
<protein>
    <recommendedName>
        <fullName evidence="1">Putrescine aminotransferase</fullName>
        <shortName evidence="1">PAT</shortName>
        <shortName evidence="1">PATase</shortName>
        <ecNumber evidence="1">2.6.1.82</ecNumber>
    </recommendedName>
    <alternativeName>
        <fullName evidence="1">Cadaverine transaminase</fullName>
    </alternativeName>
    <alternativeName>
        <fullName evidence="1">Diamine transaminase</fullName>
        <ecNumber evidence="1">2.6.1.29</ecNumber>
    </alternativeName>
    <alternativeName>
        <fullName evidence="1">Putrescine transaminase</fullName>
    </alternativeName>
    <alternativeName>
        <fullName evidence="1">Putrescine--2-oxoglutaric acid transaminase</fullName>
    </alternativeName>
</protein>
<proteinExistence type="inferred from homology"/>
<name>PAT_ECO55</name>
<keyword id="KW-0032">Aminotransferase</keyword>
<keyword id="KW-0663">Pyridoxal phosphate</keyword>
<keyword id="KW-1185">Reference proteome</keyword>
<keyword id="KW-0808">Transferase</keyword>
<gene>
    <name evidence="1" type="primary">patA</name>
    <name type="ordered locus">EC55989_3487</name>
</gene>